<name>RRG1_YEAS8</name>
<dbReference type="EMBL" id="FN393063">
    <property type="protein sequence ID" value="CAY78573.1"/>
    <property type="molecule type" value="Genomic_DNA"/>
</dbReference>
<dbReference type="SMR" id="C8Z4Y4"/>
<dbReference type="HOGENOM" id="CLU_062256_0_0_1"/>
<dbReference type="OrthoDB" id="37683at4893"/>
<dbReference type="Proteomes" id="UP000000286">
    <property type="component" value="Chromosome IV, Scaffold EC1118_1D0"/>
</dbReference>
<dbReference type="GO" id="GO:0005739">
    <property type="term" value="C:mitochondrion"/>
    <property type="evidence" value="ECO:0007669"/>
    <property type="project" value="UniProtKB-SubCell"/>
</dbReference>
<proteinExistence type="inferred from homology"/>
<reference key="1">
    <citation type="journal article" date="2009" name="Proc. Natl. Acad. Sci. U.S.A.">
        <title>Eukaryote-to-eukaryote gene transfer events revealed by the genome sequence of the wine yeast Saccharomyces cerevisiae EC1118.</title>
        <authorList>
            <person name="Novo M."/>
            <person name="Bigey F."/>
            <person name="Beyne E."/>
            <person name="Galeote V."/>
            <person name="Gavory F."/>
            <person name="Mallet S."/>
            <person name="Cambon B."/>
            <person name="Legras J.-L."/>
            <person name="Wincker P."/>
            <person name="Casaregola S."/>
            <person name="Dequin S."/>
        </authorList>
    </citation>
    <scope>NUCLEOTIDE SEQUENCE [LARGE SCALE GENOMIC DNA]</scope>
    <source>
        <strain>Lalvin EC1118 / Prise de mousse</strain>
    </source>
</reference>
<evidence type="ECO:0000250" key="1"/>
<evidence type="ECO:0000305" key="2"/>
<comment type="function">
    <text evidence="1">Essential for respiratory growth and required for mitochondrial protein synthesis. Required for vacuolar acidification (By similarity).</text>
</comment>
<comment type="subcellular location">
    <subcellularLocation>
        <location evidence="1">Mitochondrion</location>
    </subcellularLocation>
</comment>
<comment type="PTM">
    <text evidence="1">N-glycosylated. Glycosylation is important for correct localization of the protein (By similarity).</text>
</comment>
<comment type="similarity">
    <text evidence="2">Belongs to the RRG1 family.</text>
</comment>
<protein>
    <recommendedName>
        <fullName>Required for respiratory growth protein 1, mitochondrial</fullName>
    </recommendedName>
</protein>
<sequence>MAQNFGKIPSHKSYVLSLYRTVLRNIPKCCHSYAFQYEIKKTLSKQLFKHKHDKSSWSVYTLLNEFSLLNNCLLEGKLQEIKNLMKPLKKMKKQLETTKILNSLTSLGDVKTNDPEEVRRFHVLSAYIKRKQDLGLLPAYIPKTYQHKLLLPLALNEHACLKLFHIQQKLKNGPPSAGLSYTKEGRNQIWFVRSPINKGRQQSKKLGILIRKERKDSQKNIDNLNFCEINAAWALHEAIWEEYLESKKIIKVNLPKYLEYAANIPKSTKCNPSSQYQKVKEWVDPVREIMFELHSKSFQRVEYFNKYKEKLLKNGGQLAYFDKKSKEMYAKRLTLFRKMSKETLPYVTLFIEGRDLPSVLAKYGF</sequence>
<feature type="chain" id="PRO_0000402250" description="Required for respiratory growth protein 1, mitochondrial">
    <location>
        <begin position="1"/>
        <end position="365"/>
    </location>
</feature>
<organism>
    <name type="scientific">Saccharomyces cerevisiae (strain Lalvin EC1118 / Prise de mousse)</name>
    <name type="common">Baker's yeast</name>
    <dbReference type="NCBI Taxonomy" id="643680"/>
    <lineage>
        <taxon>Eukaryota</taxon>
        <taxon>Fungi</taxon>
        <taxon>Dikarya</taxon>
        <taxon>Ascomycota</taxon>
        <taxon>Saccharomycotina</taxon>
        <taxon>Saccharomycetes</taxon>
        <taxon>Saccharomycetales</taxon>
        <taxon>Saccharomycetaceae</taxon>
        <taxon>Saccharomyces</taxon>
    </lineage>
</organism>
<accession>C8Z4Y4</accession>
<gene>
    <name type="primary">RRG1</name>
    <name type="ORF">EC1118_1D0_3114g</name>
</gene>
<keyword id="KW-0325">Glycoprotein</keyword>
<keyword id="KW-0496">Mitochondrion</keyword>